<proteinExistence type="evidence at protein level"/>
<keyword id="KW-1015">Disulfide bond</keyword>
<keyword id="KW-0325">Glycoprotein</keyword>
<keyword id="KW-0326">Glycosidase</keyword>
<keyword id="KW-0378">Hydrolase</keyword>
<keyword id="KW-0458">Lysosome</keyword>
<keyword id="KW-1185">Reference proteome</keyword>
<keyword id="KW-0732">Signal</keyword>
<protein>
    <recommendedName>
        <fullName>Alpha-L-iduronidase</fullName>
        <ecNumber>3.2.1.76</ecNumber>
    </recommendedName>
</protein>
<name>IDUA_MOUSE</name>
<sequence length="634" mass="71254">MLTFFAAFLAAPLALAESPYLVRVDAARPLRPLLPFWRSTGFCPPLPHDQADQYDLSWDQQLNLAYIGAVPHSGIEQVRIHWLLDLITARKSPGQGLMYNFTHLDAFLDLLMENQLLPGFELMGSPSGYFTDFDDKQQVFEWKDLVSLLARRYIGRYGLTHVSKWNFETWNEPDHHDFDNVSMTTQGFLNYYDACSEGLRIASPTLKLGGPGDSFHPLPRSPMCWSLLGHCANGTNFFTGEVGVRLDYISLHKKGAGSSIAILEQEMAVVEQVQQLFPEFKDTPIYNDEADPLVGWSLPQPWRADVTYAALVVKVIAQHQNLLFANSSSSMRYVLLSNDNAFLSYHPYPFSQRTLTARFQVNNTHPPHVQLLRKPVLTVMGLMALLDGEQLWAEVSKAGAVLDSNHTVGVLASTHHPEGSAAAWSTTVLIYTSDDTHAHPNHSIPVTLRLRGVPPGLDLVYIVLYLDNQLSSPYSAWQHMGQPVFPSAEQFRRMRMVEDPVAEAPRPFPARGRLTLHRKLPVPSLLLVHVCTRPLKPPGQVSRLRALPLTHGQLILVWSDERVGSKCLWTYEIQFSQKGEEYAPINRRPSTFNLFVFSPDTAVVSGSYRVRALDYWARPGPFSDPVTYLDVPAS</sequence>
<comment type="catalytic activity">
    <reaction evidence="6">
        <text>Hydrolysis of unsulfated alpha-L-iduronosidic linkages in dermatan sulfate.</text>
        <dbReference type="EC" id="3.2.1.76"/>
    </reaction>
</comment>
<comment type="subunit">
    <text evidence="1">Monomer.</text>
</comment>
<comment type="subcellular location">
    <subcellularLocation>
        <location evidence="2">Lysosome</location>
    </subcellularLocation>
</comment>
<comment type="tissue specificity">
    <text evidence="6">Ubiquitous.</text>
</comment>
<comment type="PTM">
    <text evidence="1">N-glycosylation contributes to substrate binding and is required for full enzymatic activity.</text>
</comment>
<comment type="similarity">
    <text evidence="7">Belongs to the glycosyl hydrolase 39 family.</text>
</comment>
<evidence type="ECO:0000250" key="1"/>
<evidence type="ECO:0000250" key="2">
    <source>
        <dbReference type="UniProtKB" id="P35475"/>
    </source>
</evidence>
<evidence type="ECO:0000255" key="3"/>
<evidence type="ECO:0000255" key="4">
    <source>
        <dbReference type="PROSITE-ProRule" id="PRU00498"/>
    </source>
</evidence>
<evidence type="ECO:0000255" key="5">
    <source>
        <dbReference type="PROSITE-ProRule" id="PRU10068"/>
    </source>
</evidence>
<evidence type="ECO:0000269" key="6">
    <source>
    </source>
</evidence>
<evidence type="ECO:0000305" key="7"/>
<accession>P48441</accession>
<accession>E9QM17</accession>
<gene>
    <name type="primary">Idua</name>
</gene>
<organism>
    <name type="scientific">Mus musculus</name>
    <name type="common">Mouse</name>
    <dbReference type="NCBI Taxonomy" id="10090"/>
    <lineage>
        <taxon>Eukaryota</taxon>
        <taxon>Metazoa</taxon>
        <taxon>Chordata</taxon>
        <taxon>Craniata</taxon>
        <taxon>Vertebrata</taxon>
        <taxon>Euteleostomi</taxon>
        <taxon>Mammalia</taxon>
        <taxon>Eutheria</taxon>
        <taxon>Euarchontoglires</taxon>
        <taxon>Glires</taxon>
        <taxon>Rodentia</taxon>
        <taxon>Myomorpha</taxon>
        <taxon>Muroidea</taxon>
        <taxon>Muridae</taxon>
        <taxon>Murinae</taxon>
        <taxon>Mus</taxon>
        <taxon>Mus</taxon>
    </lineage>
</organism>
<feature type="signal peptide" evidence="3">
    <location>
        <begin position="1"/>
        <end position="16"/>
    </location>
</feature>
<feature type="chain" id="PRO_0000012201" description="Alpha-L-iduronidase">
    <location>
        <begin position="17"/>
        <end position="634"/>
    </location>
</feature>
<feature type="active site" description="Proton donor" evidence="5">
    <location>
        <position position="172"/>
    </location>
</feature>
<feature type="active site" description="Nucleophile" evidence="1">
    <location>
        <position position="289"/>
    </location>
</feature>
<feature type="binding site" evidence="2">
    <location>
        <position position="44"/>
    </location>
    <ligand>
        <name>alpha-D-mannopyranose</name>
        <dbReference type="ChEBI" id="CHEBI:28729"/>
    </ligand>
</feature>
<feature type="binding site" evidence="2">
    <location>
        <position position="46"/>
    </location>
    <ligand>
        <name>alpha-D-mannopyranose</name>
        <dbReference type="ChEBI" id="CHEBI:28729"/>
    </ligand>
</feature>
<feature type="binding site" evidence="2">
    <location>
        <position position="48"/>
    </location>
    <ligand>
        <name>alpha-D-mannopyranose</name>
        <dbReference type="ChEBI" id="CHEBI:28729"/>
    </ligand>
</feature>
<feature type="binding site" evidence="2">
    <location>
        <position position="81"/>
    </location>
    <ligand>
        <name>alpha-L-iduronate</name>
        <dbReference type="ChEBI" id="CHEBI:193037"/>
    </ligand>
</feature>
<feature type="binding site" evidence="2">
    <location>
        <position position="171"/>
    </location>
    <ligand>
        <name>alpha-L-iduronate</name>
        <dbReference type="ChEBI" id="CHEBI:193037"/>
    </ligand>
</feature>
<feature type="binding site" evidence="2">
    <location>
        <position position="172"/>
    </location>
    <ligand>
        <name>alpha-L-iduronate</name>
        <dbReference type="ChEBI" id="CHEBI:193037"/>
    </ligand>
</feature>
<feature type="binding site" evidence="2">
    <location>
        <position position="254"/>
    </location>
    <ligand>
        <name>alpha-L-iduronate</name>
        <dbReference type="ChEBI" id="CHEBI:193037"/>
    </ligand>
</feature>
<feature type="binding site" evidence="2">
    <location>
        <position position="289"/>
    </location>
    <ligand>
        <name>alpha-L-iduronate</name>
        <dbReference type="ChEBI" id="CHEBI:193037"/>
    </ligand>
</feature>
<feature type="binding site" evidence="2">
    <location>
        <position position="295"/>
    </location>
    <ligand>
        <name>alpha-L-iduronate</name>
        <dbReference type="ChEBI" id="CHEBI:193037"/>
    </ligand>
</feature>
<feature type="binding site" evidence="2">
    <location>
        <position position="296"/>
    </location>
    <ligand>
        <name>alpha-D-mannopyranose</name>
        <dbReference type="ChEBI" id="CHEBI:28729"/>
    </ligand>
</feature>
<feature type="binding site" evidence="2">
    <location>
        <position position="339"/>
    </location>
    <ligand>
        <name>alpha-L-iduronate</name>
        <dbReference type="ChEBI" id="CHEBI:193037"/>
    </ligand>
</feature>
<feature type="binding site" evidence="2">
    <location>
        <position position="353"/>
    </location>
    <ligand>
        <name>alpha-L-iduronate</name>
        <dbReference type="ChEBI" id="CHEBI:193037"/>
    </ligand>
</feature>
<feature type="glycosylation site" description="N-linked (GlcNAc...) asparagine" evidence="4">
    <location>
        <position position="100"/>
    </location>
</feature>
<feature type="glycosylation site" description="N-linked (GlcNAc...) asparagine" evidence="4">
    <location>
        <position position="180"/>
    </location>
</feature>
<feature type="glycosylation site" description="N-linked (GlcNAc...) asparagine" evidence="4">
    <location>
        <position position="233"/>
    </location>
</feature>
<feature type="glycosylation site" description="N-linked (GlcNAc...) asparagine" evidence="4">
    <location>
        <position position="326"/>
    </location>
</feature>
<feature type="glycosylation site" description="N-linked (GlcNAc...) asparagine" evidence="4">
    <location>
        <position position="362"/>
    </location>
</feature>
<feature type="glycosylation site" description="N-linked (GlcNAc...) asparagine" evidence="4">
    <location>
        <position position="405"/>
    </location>
</feature>
<feature type="glycosylation site" description="N-linked (GlcNAc...) asparagine" evidence="4">
    <location>
        <position position="441"/>
    </location>
</feature>
<feature type="disulfide bond" evidence="2">
    <location>
        <begin position="531"/>
        <end position="567"/>
    </location>
</feature>
<feature type="sequence conflict" description="In Ref. 1; AAC42044." evidence="7" ref="1">
    <original>F</original>
    <variation>S</variation>
    <location>
        <position position="359"/>
    </location>
</feature>
<feature type="sequence conflict" description="In Ref. 1; AAC42044." evidence="7" ref="1">
    <original>A</original>
    <variation>G</variation>
    <location>
        <position position="423"/>
    </location>
</feature>
<reference key="1">
    <citation type="journal article" date="1994" name="Genomics">
        <title>Murine alpha-L-iduronidase: cDNA isolation and expression.</title>
        <authorList>
            <person name="Clarke L.A."/>
        </authorList>
    </citation>
    <scope>NUCLEOTIDE SEQUENCE [MRNA]</scope>
    <scope>CATALYTIC ACTIVITY</scope>
    <scope>TISSUE SPECIFICITY</scope>
    <source>
        <strain>C57BL/6 X CBA</strain>
        <tissue>Liver</tissue>
    </source>
</reference>
<reference key="2">
    <citation type="journal article" date="2009" name="PLoS Biol.">
        <title>Lineage-specific biology revealed by a finished genome assembly of the mouse.</title>
        <authorList>
            <person name="Church D.M."/>
            <person name="Goodstadt L."/>
            <person name="Hillier L.W."/>
            <person name="Zody M.C."/>
            <person name="Goldstein S."/>
            <person name="She X."/>
            <person name="Bult C.J."/>
            <person name="Agarwala R."/>
            <person name="Cherry J.L."/>
            <person name="DiCuccio M."/>
            <person name="Hlavina W."/>
            <person name="Kapustin Y."/>
            <person name="Meric P."/>
            <person name="Maglott D."/>
            <person name="Birtle Z."/>
            <person name="Marques A.C."/>
            <person name="Graves T."/>
            <person name="Zhou S."/>
            <person name="Teague B."/>
            <person name="Potamousis K."/>
            <person name="Churas C."/>
            <person name="Place M."/>
            <person name="Herschleb J."/>
            <person name="Runnheim R."/>
            <person name="Forrest D."/>
            <person name="Amos-Landgraf J."/>
            <person name="Schwartz D.C."/>
            <person name="Cheng Z."/>
            <person name="Lindblad-Toh K."/>
            <person name="Eichler E.E."/>
            <person name="Ponting C.P."/>
        </authorList>
    </citation>
    <scope>NUCLEOTIDE SEQUENCE [LARGE SCALE GENOMIC DNA]</scope>
    <source>
        <strain>C57BL/6J</strain>
    </source>
</reference>
<dbReference type="EC" id="3.2.1.76"/>
<dbReference type="EMBL" id="L34111">
    <property type="protein sequence ID" value="AAC42044.1"/>
    <property type="molecule type" value="mRNA"/>
</dbReference>
<dbReference type="EMBL" id="AC161813">
    <property type="status" value="NOT_ANNOTATED_CDS"/>
    <property type="molecule type" value="Genomic_DNA"/>
</dbReference>
<dbReference type="PIR" id="A55683">
    <property type="entry name" value="A55683"/>
</dbReference>
<dbReference type="SMR" id="P48441"/>
<dbReference type="FunCoup" id="P48441">
    <property type="interactions" value="100"/>
</dbReference>
<dbReference type="STRING" id="10090.ENSMUSP00000071577"/>
<dbReference type="CAZy" id="GH39">
    <property type="family name" value="Glycoside Hydrolase Family 39"/>
</dbReference>
<dbReference type="GlyConnect" id="2122">
    <property type="glycosylation" value="5 N-Linked glycans (2 sites)"/>
</dbReference>
<dbReference type="GlyCosmos" id="P48441">
    <property type="glycosylation" value="2 sites, 5 glycans"/>
</dbReference>
<dbReference type="GlyGen" id="P48441">
    <property type="glycosylation" value="7 sites, 7 N-linked glycans (3 sites)"/>
</dbReference>
<dbReference type="iPTMnet" id="P48441"/>
<dbReference type="PhosphoSitePlus" id="P48441"/>
<dbReference type="PaxDb" id="10090-ENSMUSP00000071577"/>
<dbReference type="PeptideAtlas" id="P48441"/>
<dbReference type="ProteomicsDB" id="267254"/>
<dbReference type="AGR" id="MGI:96418"/>
<dbReference type="MGI" id="MGI:96418">
    <property type="gene designation" value="Idua"/>
</dbReference>
<dbReference type="eggNOG" id="ENOG502QRES">
    <property type="taxonomic scope" value="Eukaryota"/>
</dbReference>
<dbReference type="InParanoid" id="P48441"/>
<dbReference type="Reactome" id="R-MMU-2024096">
    <property type="pathway name" value="HS-GAG degradation"/>
</dbReference>
<dbReference type="Reactome" id="R-MMU-2024101">
    <property type="pathway name" value="CS/DS degradation"/>
</dbReference>
<dbReference type="ChiTaRS" id="Idua">
    <property type="organism name" value="mouse"/>
</dbReference>
<dbReference type="PRO" id="PR:P48441"/>
<dbReference type="Proteomes" id="UP000000589">
    <property type="component" value="Unplaced"/>
</dbReference>
<dbReference type="RNAct" id="P48441">
    <property type="molecule type" value="protein"/>
</dbReference>
<dbReference type="GO" id="GO:0005615">
    <property type="term" value="C:extracellular space"/>
    <property type="evidence" value="ECO:0000314"/>
    <property type="project" value="MGI"/>
</dbReference>
<dbReference type="GO" id="GO:0043202">
    <property type="term" value="C:lysosomal lumen"/>
    <property type="evidence" value="ECO:0000315"/>
    <property type="project" value="MGI"/>
</dbReference>
<dbReference type="GO" id="GO:0005764">
    <property type="term" value="C:lysosome"/>
    <property type="evidence" value="ECO:0000315"/>
    <property type="project" value="MGI"/>
</dbReference>
<dbReference type="GO" id="GO:0003940">
    <property type="term" value="F:L-iduronidase activity"/>
    <property type="evidence" value="ECO:0000314"/>
    <property type="project" value="MGI"/>
</dbReference>
<dbReference type="GO" id="GO:0008344">
    <property type="term" value="P:adult locomotory behavior"/>
    <property type="evidence" value="ECO:0000315"/>
    <property type="project" value="MGI"/>
</dbReference>
<dbReference type="GO" id="GO:0007628">
    <property type="term" value="P:adult walking behavior"/>
    <property type="evidence" value="ECO:0000315"/>
    <property type="project" value="MGI"/>
</dbReference>
<dbReference type="GO" id="GO:0060348">
    <property type="term" value="P:bone development"/>
    <property type="evidence" value="ECO:0000315"/>
    <property type="project" value="MGI"/>
</dbReference>
<dbReference type="GO" id="GO:0005975">
    <property type="term" value="P:carbohydrate metabolic process"/>
    <property type="evidence" value="ECO:0007669"/>
    <property type="project" value="InterPro"/>
</dbReference>
<dbReference type="GO" id="GO:1990079">
    <property type="term" value="P:cartilage homeostasis"/>
    <property type="evidence" value="ECO:0000315"/>
    <property type="project" value="MGI"/>
</dbReference>
<dbReference type="GO" id="GO:0000902">
    <property type="term" value="P:cell morphogenesis"/>
    <property type="evidence" value="ECO:0000315"/>
    <property type="project" value="MGI"/>
</dbReference>
<dbReference type="GO" id="GO:0048878">
    <property type="term" value="P:chemical homeostasis"/>
    <property type="evidence" value="ECO:0000315"/>
    <property type="project" value="MGI"/>
</dbReference>
<dbReference type="GO" id="GO:0030209">
    <property type="term" value="P:dermatan sulfate proteoglycan catabolic process"/>
    <property type="evidence" value="ECO:0000314"/>
    <property type="project" value="MGI"/>
</dbReference>
<dbReference type="GO" id="GO:0030198">
    <property type="term" value="P:extracellular matrix organization"/>
    <property type="evidence" value="ECO:0000315"/>
    <property type="project" value="MGI"/>
</dbReference>
<dbReference type="GO" id="GO:0006027">
    <property type="term" value="P:glycosaminoglycan catabolic process"/>
    <property type="evidence" value="ECO:0000314"/>
    <property type="project" value="MGI"/>
</dbReference>
<dbReference type="GO" id="GO:0030200">
    <property type="term" value="P:heparan sulfate proteoglycan catabolic process"/>
    <property type="evidence" value="ECO:0000315"/>
    <property type="project" value="MGI"/>
</dbReference>
<dbReference type="GO" id="GO:0030211">
    <property type="term" value="P:heparin proteoglycan catabolic process"/>
    <property type="evidence" value="ECO:0000314"/>
    <property type="project" value="MGI"/>
</dbReference>
<dbReference type="GO" id="GO:0035108">
    <property type="term" value="P:limb morphogenesis"/>
    <property type="evidence" value="ECO:0000315"/>
    <property type="project" value="MGI"/>
</dbReference>
<dbReference type="GO" id="GO:0007626">
    <property type="term" value="P:locomotory behavior"/>
    <property type="evidence" value="ECO:0000315"/>
    <property type="project" value="MGI"/>
</dbReference>
<dbReference type="GO" id="GO:0007040">
    <property type="term" value="P:lysosome organization"/>
    <property type="evidence" value="ECO:0000315"/>
    <property type="project" value="MGI"/>
</dbReference>
<dbReference type="GO" id="GO:0007613">
    <property type="term" value="P:memory"/>
    <property type="evidence" value="ECO:0000315"/>
    <property type="project" value="MGI"/>
</dbReference>
<dbReference type="GO" id="GO:0061037">
    <property type="term" value="P:negative regulation of cartilage development"/>
    <property type="evidence" value="ECO:0000315"/>
    <property type="project" value="MGI"/>
</dbReference>
<dbReference type="GO" id="GO:0090341">
    <property type="term" value="P:negative regulation of secretion of lysosomal enzymes"/>
    <property type="evidence" value="ECO:0000314"/>
    <property type="project" value="MGI"/>
</dbReference>
<dbReference type="GO" id="GO:0045780">
    <property type="term" value="P:positive regulation of bone resorption"/>
    <property type="evidence" value="ECO:0000315"/>
    <property type="project" value="MGI"/>
</dbReference>
<dbReference type="GO" id="GO:0120158">
    <property type="term" value="P:positive regulation of collagen catabolic process"/>
    <property type="evidence" value="ECO:0000315"/>
    <property type="project" value="MGI"/>
</dbReference>
<dbReference type="GO" id="GO:0048705">
    <property type="term" value="P:skeletal system morphogenesis"/>
    <property type="evidence" value="ECO:0000315"/>
    <property type="project" value="MGI"/>
</dbReference>
<dbReference type="GO" id="GO:0008542">
    <property type="term" value="P:visual learning"/>
    <property type="evidence" value="ECO:0000315"/>
    <property type="project" value="MGI"/>
</dbReference>
<dbReference type="FunFam" id="2.60.40.10:FF:001526">
    <property type="entry name" value="Alpha-L-iduronidase"/>
    <property type="match status" value="1"/>
</dbReference>
<dbReference type="FunFam" id="2.60.40.1500:FF:000001">
    <property type="entry name" value="Alpha-L-iduronidase"/>
    <property type="match status" value="1"/>
</dbReference>
<dbReference type="FunFam" id="3.20.20.80:FF:000059">
    <property type="entry name" value="Alpha-L-iduronidase"/>
    <property type="match status" value="1"/>
</dbReference>
<dbReference type="Gene3D" id="3.20.20.80">
    <property type="entry name" value="Glycosidases"/>
    <property type="match status" value="1"/>
</dbReference>
<dbReference type="Gene3D" id="2.60.40.1500">
    <property type="entry name" value="Glycosyl hydrolase domain, family 39"/>
    <property type="match status" value="1"/>
</dbReference>
<dbReference type="Gene3D" id="2.60.40.10">
    <property type="entry name" value="Immunoglobulins"/>
    <property type="match status" value="1"/>
</dbReference>
<dbReference type="InterPro" id="IPR049165">
    <property type="entry name" value="GH39_as"/>
</dbReference>
<dbReference type="InterPro" id="IPR049167">
    <property type="entry name" value="GH39_C"/>
</dbReference>
<dbReference type="InterPro" id="IPR049166">
    <property type="entry name" value="GH39_cat"/>
</dbReference>
<dbReference type="InterPro" id="IPR000514">
    <property type="entry name" value="Glyco_hydro_39"/>
</dbReference>
<dbReference type="InterPro" id="IPR017853">
    <property type="entry name" value="Glycoside_hydrolase_SF"/>
</dbReference>
<dbReference type="InterPro" id="IPR051923">
    <property type="entry name" value="Glycosyl_Hydrolase_39"/>
</dbReference>
<dbReference type="InterPro" id="IPR013783">
    <property type="entry name" value="Ig-like_fold"/>
</dbReference>
<dbReference type="PANTHER" id="PTHR12631">
    <property type="entry name" value="ALPHA-L-IDURONIDASE"/>
    <property type="match status" value="1"/>
</dbReference>
<dbReference type="PANTHER" id="PTHR12631:SF8">
    <property type="entry name" value="ALPHA-L-IDURONIDASE"/>
    <property type="match status" value="1"/>
</dbReference>
<dbReference type="Pfam" id="PF01229">
    <property type="entry name" value="Glyco_hydro_39"/>
    <property type="match status" value="1"/>
</dbReference>
<dbReference type="Pfam" id="PF21200">
    <property type="entry name" value="Glyco_hydro_39_C"/>
    <property type="match status" value="1"/>
</dbReference>
<dbReference type="PRINTS" id="PR00745">
    <property type="entry name" value="GLHYDRLASE39"/>
</dbReference>
<dbReference type="SUPFAM" id="SSF51445">
    <property type="entry name" value="(Trans)glycosidases"/>
    <property type="match status" value="1"/>
</dbReference>
<dbReference type="SUPFAM" id="SSF51011">
    <property type="entry name" value="Glycosyl hydrolase domain"/>
    <property type="match status" value="1"/>
</dbReference>
<dbReference type="PROSITE" id="PS01027">
    <property type="entry name" value="GLYCOSYL_HYDROL_F39"/>
    <property type="match status" value="1"/>
</dbReference>